<organism>
    <name type="scientific">Rattus norvegicus</name>
    <name type="common">Rat</name>
    <dbReference type="NCBI Taxonomy" id="10116"/>
    <lineage>
        <taxon>Eukaryota</taxon>
        <taxon>Metazoa</taxon>
        <taxon>Chordata</taxon>
        <taxon>Craniata</taxon>
        <taxon>Vertebrata</taxon>
        <taxon>Euteleostomi</taxon>
        <taxon>Mammalia</taxon>
        <taxon>Eutheria</taxon>
        <taxon>Euarchontoglires</taxon>
        <taxon>Glires</taxon>
        <taxon>Rodentia</taxon>
        <taxon>Myomorpha</taxon>
        <taxon>Muroidea</taxon>
        <taxon>Muridae</taxon>
        <taxon>Murinae</taxon>
        <taxon>Rattus</taxon>
    </lineage>
</organism>
<comment type="function">
    <text>Catalyzes the hydrolysis of fructose 1,6-bisphosphate to fructose 6-phosphate in the presence of divalent cations and probably participates in glycogen synthesis from carbohydrate precursors, such as lactate.</text>
</comment>
<comment type="catalytic activity">
    <reaction>
        <text>beta-D-fructose 1,6-bisphosphate + H2O = beta-D-fructose 6-phosphate + phosphate</text>
        <dbReference type="Rhea" id="RHEA:11064"/>
        <dbReference type="ChEBI" id="CHEBI:15377"/>
        <dbReference type="ChEBI" id="CHEBI:32966"/>
        <dbReference type="ChEBI" id="CHEBI:43474"/>
        <dbReference type="ChEBI" id="CHEBI:57634"/>
        <dbReference type="EC" id="3.1.3.11"/>
    </reaction>
</comment>
<comment type="cofactor">
    <cofactor evidence="1">
        <name>Mg(2+)</name>
        <dbReference type="ChEBI" id="CHEBI:18420"/>
    </cofactor>
    <text evidence="1">Binds 3 Mg(2+) ions per subunit.</text>
</comment>
<comment type="activity regulation">
    <text evidence="1">Subject to complex allosteric regulation. The enzyme can assume an active R-state, or an inactive T-state. Intermediate conformations may exist. AMP acts as an allosteric inhibitor. Fructose 2,6-bisphosphate acts as a competitive inhibitor. Strongly inhibited by Ca(2+) (By similarity).</text>
</comment>
<comment type="pathway">
    <text>Carbohydrate biosynthesis; gluconeogenesis.</text>
</comment>
<comment type="subunit">
    <text evidence="1">Homotetramer. Interacts with ALDOA; the interaction blocks inhibition by physiological concentrations of AMP and reduces inhibition by Ca(2+). Interacts with alpha-actinin and F-actin (By similarity).</text>
</comment>
<comment type="subcellular location">
    <subcellularLocation>
        <location>Cell junction</location>
    </subcellularLocation>
    <subcellularLocation>
        <location>Cytoplasm</location>
    </subcellularLocation>
    <subcellularLocation>
        <location>Nucleus</location>
    </subcellularLocation>
    <subcellularLocation>
        <location>Cytoplasm</location>
        <location>Myofibril</location>
        <location>Sarcomere</location>
        <location>Z line</location>
    </subcellularLocation>
    <text>In neonatal cardiomyocytes, distributed throughout the cytosol, accumulating in the intercalated disks which occur at the Z line of cardiomyocytes and connect adjacent cells, and also located in the nucleus; dissociates from the Z line following an increase in cytosolic Ca(2+) concentration. In muscle precursor cells, localizes predominantly to the nucleus and to a lesser extent to the cytoplasm at the proliferative phase, while mainly localizing to the cytoplasm at the differentiation phase. Colocalizes with ALDOA and alpha-actinin on both sides of the Z line of skeletal muscle; dissociates rapidly from the Z line following an increase in cytosolic Ca(2+) concentration.</text>
</comment>
<comment type="similarity">
    <text evidence="2">Belongs to the FBPase class 1 family.</text>
</comment>
<reference key="1">
    <citation type="submission" date="1998-04" db="EMBL/GenBank/DDBJ databases">
        <title>Cloning and expression of rat muscle fructose-1,6-bisphosphatase cDNA.</title>
        <authorList>
            <person name="Al-Robaiy S."/>
            <person name="Eschrich K."/>
        </authorList>
    </citation>
    <scope>NUCLEOTIDE SEQUENCE [MRNA]</scope>
    <source>
        <tissue>Skeletal muscle</tissue>
    </source>
</reference>
<reference key="2">
    <citation type="journal article" date="2006" name="FEBS Lett.">
        <title>Changes in subcellular localization of fructose 1,6-bisphosphatase during differentiation of isolated muscle satellite cells.</title>
        <authorList>
            <person name="Gizak A."/>
            <person name="Wrobel E."/>
            <person name="Moraczewski J."/>
            <person name="Dzugaj A."/>
        </authorList>
    </citation>
    <scope>SUBCELLULAR LOCATION</scope>
</reference>
<reference key="3">
    <citation type="journal article" date="2010" name="Acta Biochim. Pol.">
        <title>Regulation of subcellular localization of muscle FBPase in cardiomyocytes. The decisive role of calcium ions.</title>
        <authorList>
            <person name="Majkowski M."/>
            <person name="Wypych D."/>
            <person name="Pomorski P."/>
            <person name="Dzugaj A."/>
        </authorList>
    </citation>
    <scope>SUBCELLULAR LOCATION</scope>
</reference>
<reference key="4">
    <citation type="journal article" date="2012" name="Nat. Commun.">
        <title>Quantitative maps of protein phosphorylation sites across 14 different rat organs and tissues.</title>
        <authorList>
            <person name="Lundby A."/>
            <person name="Secher A."/>
            <person name="Lage K."/>
            <person name="Nordsborg N.B."/>
            <person name="Dmytriyev A."/>
            <person name="Lundby C."/>
            <person name="Olsen J.V."/>
        </authorList>
    </citation>
    <scope>PHOSPHORYLATION [LARGE SCALE ANALYSIS] AT TYR-216 AND TYR-219</scope>
    <scope>IDENTIFICATION BY MASS SPECTROMETRY [LARGE SCALE ANALYSIS]</scope>
</reference>
<sequence>MTDRSPFETDMLTLTRYVMEKGRQAKGTGELTQLLNSMLTAIKAISSAVRKAGLANLYGIAGSVNVTGDEVKKLDVLSNSLVINMLQSSYSTCVLVSEENKEAVITAKERRGKYVVCFDPLDGSSNIDCLASIGTIFAIYRKTTEDEPSEKDALQPGRNIVAAGYALYGSATLVALSTGQGVDLFMLDPALGEFVLVEKDIRIKKKGKIFSLNEGYAKYFDAATAEYVQKKKFPEDGSAPYGARYVGSMVADVHRTLVYGGIFMYPANQKSPNGKLRLLYECNPVAYIIEQAGGMATTGTQPVLDVKPESIHQRVPLILGSPEDVQEYLSCVQRNQAGR</sequence>
<dbReference type="EC" id="3.1.3.11"/>
<dbReference type="EMBL" id="AJ005046">
    <property type="protein sequence ID" value="CAA06313.1"/>
    <property type="molecule type" value="mRNA"/>
</dbReference>
<dbReference type="RefSeq" id="NP_446168.1">
    <property type="nucleotide sequence ID" value="NM_053716.2"/>
</dbReference>
<dbReference type="SMR" id="Q9Z1N1"/>
<dbReference type="FunCoup" id="Q9Z1N1">
    <property type="interactions" value="319"/>
</dbReference>
<dbReference type="STRING" id="10116.ENSRNOP00000023865"/>
<dbReference type="iPTMnet" id="Q9Z1N1"/>
<dbReference type="PhosphoSitePlus" id="Q9Z1N1"/>
<dbReference type="jPOST" id="Q9Z1N1"/>
<dbReference type="PaxDb" id="10116-ENSRNOP00000023865"/>
<dbReference type="Ensembl" id="ENSRNOT00000023865.4">
    <property type="protein sequence ID" value="ENSRNOP00000023865.2"/>
    <property type="gene ID" value="ENSRNOG00000017637.6"/>
</dbReference>
<dbReference type="GeneID" id="114508"/>
<dbReference type="KEGG" id="rno:114508"/>
<dbReference type="UCSC" id="RGD:620930">
    <property type="organism name" value="rat"/>
</dbReference>
<dbReference type="AGR" id="RGD:620930"/>
<dbReference type="CTD" id="8789"/>
<dbReference type="RGD" id="620930">
    <property type="gene designation" value="Fbp2"/>
</dbReference>
<dbReference type="eggNOG" id="KOG1458">
    <property type="taxonomic scope" value="Eukaryota"/>
</dbReference>
<dbReference type="GeneTree" id="ENSGT00390000015513"/>
<dbReference type="HOGENOM" id="CLU_039977_1_0_1"/>
<dbReference type="InParanoid" id="Q9Z1N1"/>
<dbReference type="OMA" id="NSRFWEP"/>
<dbReference type="OrthoDB" id="10256725at2759"/>
<dbReference type="PhylomeDB" id="Q9Z1N1"/>
<dbReference type="TreeFam" id="TF314824"/>
<dbReference type="Reactome" id="R-RNO-70263">
    <property type="pathway name" value="Gluconeogenesis"/>
</dbReference>
<dbReference type="SABIO-RK" id="Q9Z1N1"/>
<dbReference type="UniPathway" id="UPA00138"/>
<dbReference type="PRO" id="PR:Q9Z1N1"/>
<dbReference type="Proteomes" id="UP000002494">
    <property type="component" value="Chromosome 17"/>
</dbReference>
<dbReference type="Bgee" id="ENSRNOG00000017637">
    <property type="expression patterns" value="Expressed in duodenum and 16 other cell types or tissues"/>
</dbReference>
<dbReference type="GO" id="GO:0070161">
    <property type="term" value="C:anchoring junction"/>
    <property type="evidence" value="ECO:0007669"/>
    <property type="project" value="UniProtKB-SubCell"/>
</dbReference>
<dbReference type="GO" id="GO:0005737">
    <property type="term" value="C:cytoplasm"/>
    <property type="evidence" value="ECO:0000318"/>
    <property type="project" value="GO_Central"/>
</dbReference>
<dbReference type="GO" id="GO:0005829">
    <property type="term" value="C:cytosol"/>
    <property type="evidence" value="ECO:0000318"/>
    <property type="project" value="GO_Central"/>
</dbReference>
<dbReference type="GO" id="GO:0005634">
    <property type="term" value="C:nucleus"/>
    <property type="evidence" value="ECO:0007669"/>
    <property type="project" value="UniProtKB-SubCell"/>
</dbReference>
<dbReference type="GO" id="GO:0030018">
    <property type="term" value="C:Z disc"/>
    <property type="evidence" value="ECO:0007669"/>
    <property type="project" value="UniProtKB-SubCell"/>
</dbReference>
<dbReference type="GO" id="GO:0042132">
    <property type="term" value="F:fructose 1,6-bisphosphate 1-phosphatase activity"/>
    <property type="evidence" value="ECO:0000314"/>
    <property type="project" value="RGD"/>
</dbReference>
<dbReference type="GO" id="GO:0042802">
    <property type="term" value="F:identical protein binding"/>
    <property type="evidence" value="ECO:0000266"/>
    <property type="project" value="RGD"/>
</dbReference>
<dbReference type="GO" id="GO:0046872">
    <property type="term" value="F:metal ion binding"/>
    <property type="evidence" value="ECO:0007669"/>
    <property type="project" value="UniProtKB-KW"/>
</dbReference>
<dbReference type="GO" id="GO:0030388">
    <property type="term" value="P:fructose 1,6-bisphosphate metabolic process"/>
    <property type="evidence" value="ECO:0000318"/>
    <property type="project" value="GO_Central"/>
</dbReference>
<dbReference type="GO" id="GO:0006002">
    <property type="term" value="P:fructose 6-phosphate metabolic process"/>
    <property type="evidence" value="ECO:0000318"/>
    <property type="project" value="GO_Central"/>
</dbReference>
<dbReference type="GO" id="GO:0006000">
    <property type="term" value="P:fructose metabolic process"/>
    <property type="evidence" value="ECO:0000318"/>
    <property type="project" value="GO_Central"/>
</dbReference>
<dbReference type="GO" id="GO:0006094">
    <property type="term" value="P:gluconeogenesis"/>
    <property type="evidence" value="ECO:0000314"/>
    <property type="project" value="RGD"/>
</dbReference>
<dbReference type="CDD" id="cd00354">
    <property type="entry name" value="FBPase"/>
    <property type="match status" value="1"/>
</dbReference>
<dbReference type="FunFam" id="3.40.190.80:FF:000001">
    <property type="entry name" value="Fructose-1,6-bisphosphatase class 1"/>
    <property type="match status" value="1"/>
</dbReference>
<dbReference type="FunFam" id="3.30.540.10:FF:000005">
    <property type="entry name" value="Fructose-1,6-bisphosphatase isozyme 2"/>
    <property type="match status" value="1"/>
</dbReference>
<dbReference type="Gene3D" id="3.40.190.80">
    <property type="match status" value="1"/>
</dbReference>
<dbReference type="Gene3D" id="3.30.540.10">
    <property type="entry name" value="Fructose-1,6-Bisphosphatase, subunit A, domain 1"/>
    <property type="match status" value="1"/>
</dbReference>
<dbReference type="HAMAP" id="MF_01855">
    <property type="entry name" value="FBPase_class1"/>
    <property type="match status" value="1"/>
</dbReference>
<dbReference type="InterPro" id="IPR044015">
    <property type="entry name" value="FBPase_C_dom"/>
</dbReference>
<dbReference type="InterPro" id="IPR000146">
    <property type="entry name" value="FBPase_class-1"/>
</dbReference>
<dbReference type="InterPro" id="IPR033391">
    <property type="entry name" value="FBPase_N"/>
</dbReference>
<dbReference type="InterPro" id="IPR028343">
    <property type="entry name" value="FBPtase"/>
</dbReference>
<dbReference type="InterPro" id="IPR020548">
    <property type="entry name" value="Fructose_bisphosphatase_AS"/>
</dbReference>
<dbReference type="NCBIfam" id="NF006778">
    <property type="entry name" value="PRK09293.1-1"/>
    <property type="match status" value="1"/>
</dbReference>
<dbReference type="PANTHER" id="PTHR11556:SF13">
    <property type="entry name" value="FRUCTOSE-1,6-BISPHOSPHATASE ISOZYME 2"/>
    <property type="match status" value="1"/>
</dbReference>
<dbReference type="PANTHER" id="PTHR11556">
    <property type="entry name" value="FRUCTOSE-1,6-BISPHOSPHATASE-RELATED"/>
    <property type="match status" value="1"/>
</dbReference>
<dbReference type="Pfam" id="PF00316">
    <property type="entry name" value="FBPase"/>
    <property type="match status" value="1"/>
</dbReference>
<dbReference type="Pfam" id="PF18913">
    <property type="entry name" value="FBPase_C"/>
    <property type="match status" value="1"/>
</dbReference>
<dbReference type="PIRSF" id="PIRSF500210">
    <property type="entry name" value="FBPtase"/>
    <property type="match status" value="1"/>
</dbReference>
<dbReference type="PIRSF" id="PIRSF000904">
    <property type="entry name" value="FBPtase_SBPase"/>
    <property type="match status" value="1"/>
</dbReference>
<dbReference type="PRINTS" id="PR00115">
    <property type="entry name" value="F16BPHPHTASE"/>
</dbReference>
<dbReference type="SUPFAM" id="SSF56655">
    <property type="entry name" value="Carbohydrate phosphatase"/>
    <property type="match status" value="1"/>
</dbReference>
<dbReference type="PROSITE" id="PS00124">
    <property type="entry name" value="FBPASE"/>
    <property type="match status" value="1"/>
</dbReference>
<name>F16P2_RAT</name>
<gene>
    <name type="primary">Fbp2</name>
</gene>
<evidence type="ECO:0000250" key="1"/>
<evidence type="ECO:0000305" key="2"/>
<evidence type="ECO:0007744" key="3">
    <source>
    </source>
</evidence>
<proteinExistence type="evidence at protein level"/>
<feature type="chain" id="PRO_0000200507" description="Fructose-1,6-bisphosphatase isozyme 2">
    <location>
        <begin position="1"/>
        <end position="339"/>
    </location>
</feature>
<feature type="region of interest" description="Important for interaction with ALDOA" evidence="1">
    <location>
        <begin position="3"/>
        <end position="10"/>
    </location>
</feature>
<feature type="short sequence motif" description="Nuclear localization signal" evidence="1">
    <location>
        <begin position="204"/>
        <end position="208"/>
    </location>
</feature>
<feature type="binding site" evidence="1">
    <location>
        <position position="18"/>
    </location>
    <ligand>
        <name>AMP</name>
        <dbReference type="ChEBI" id="CHEBI:456215"/>
    </ligand>
</feature>
<feature type="binding site" evidence="1">
    <location>
        <begin position="28"/>
        <end position="32"/>
    </location>
    <ligand>
        <name>AMP</name>
        <dbReference type="ChEBI" id="CHEBI:456215"/>
    </ligand>
</feature>
<feature type="binding site" evidence="1">
    <location>
        <position position="69"/>
    </location>
    <ligand>
        <name>Mg(2+)</name>
        <dbReference type="ChEBI" id="CHEBI:18420"/>
        <label>1</label>
    </ligand>
</feature>
<feature type="binding site" evidence="1">
    <location>
        <position position="98"/>
    </location>
    <ligand>
        <name>Mg(2+)</name>
        <dbReference type="ChEBI" id="CHEBI:18420"/>
        <label>1</label>
    </ligand>
</feature>
<feature type="binding site" evidence="1">
    <location>
        <position position="98"/>
    </location>
    <ligand>
        <name>Mg(2+)</name>
        <dbReference type="ChEBI" id="CHEBI:18420"/>
        <label>2</label>
    </ligand>
</feature>
<feature type="binding site" evidence="1">
    <location>
        <begin position="113"/>
        <end position="114"/>
    </location>
    <ligand>
        <name>AMP</name>
        <dbReference type="ChEBI" id="CHEBI:456215"/>
    </ligand>
</feature>
<feature type="binding site" evidence="1">
    <location>
        <position position="119"/>
    </location>
    <ligand>
        <name>Mg(2+)</name>
        <dbReference type="ChEBI" id="CHEBI:18420"/>
        <label>2</label>
    </ligand>
</feature>
<feature type="binding site" evidence="1">
    <location>
        <position position="119"/>
    </location>
    <ligand>
        <name>Mg(2+)</name>
        <dbReference type="ChEBI" id="CHEBI:18420"/>
        <label>3</label>
    </ligand>
</feature>
<feature type="binding site" evidence="1">
    <location>
        <position position="121"/>
    </location>
    <ligand>
        <name>Mg(2+)</name>
        <dbReference type="ChEBI" id="CHEBI:18420"/>
        <label>2</label>
    </ligand>
</feature>
<feature type="binding site" evidence="1">
    <location>
        <position position="122"/>
    </location>
    <ligand>
        <name>Mg(2+)</name>
        <dbReference type="ChEBI" id="CHEBI:18420"/>
        <label>3</label>
    </ligand>
</feature>
<feature type="binding site" evidence="1">
    <location>
        <position position="122"/>
    </location>
    <ligand>
        <name>substrate</name>
    </ligand>
</feature>
<feature type="binding site" evidence="1">
    <location>
        <position position="141"/>
    </location>
    <ligand>
        <name>AMP</name>
        <dbReference type="ChEBI" id="CHEBI:456215"/>
    </ligand>
</feature>
<feature type="binding site" evidence="1">
    <location>
        <begin position="213"/>
        <end position="216"/>
    </location>
    <ligand>
        <name>substrate</name>
    </ligand>
</feature>
<feature type="binding site" evidence="1">
    <location>
        <begin position="245"/>
        <end position="249"/>
    </location>
    <ligand>
        <name>substrate</name>
    </ligand>
</feature>
<feature type="binding site" evidence="1">
    <location>
        <position position="265"/>
    </location>
    <ligand>
        <name>substrate</name>
    </ligand>
</feature>
<feature type="binding site" evidence="1">
    <location>
        <position position="275"/>
    </location>
    <ligand>
        <name>substrate</name>
    </ligand>
</feature>
<feature type="binding site" evidence="1">
    <location>
        <position position="281"/>
    </location>
    <ligand>
        <name>Mg(2+)</name>
        <dbReference type="ChEBI" id="CHEBI:18420"/>
        <label>3</label>
    </ligand>
</feature>
<feature type="site" description="Important for the conversion from active R-state to inactive T-state in the presence of AMP" evidence="1">
    <location>
        <position position="33"/>
    </location>
</feature>
<feature type="modified residue" description="Phosphotyrosine" evidence="3">
    <location>
        <position position="216"/>
    </location>
</feature>
<feature type="modified residue" description="Phosphotyrosine" evidence="3">
    <location>
        <position position="219"/>
    </location>
</feature>
<accession>Q9Z1N1</accession>
<protein>
    <recommendedName>
        <fullName>Fructose-1,6-bisphosphatase isozyme 2</fullName>
        <shortName>FBPase 2</shortName>
        <ecNumber>3.1.3.11</ecNumber>
    </recommendedName>
    <alternativeName>
        <fullName>D-fructose-1,6-bisphosphate 1-phosphohydrolase 2</fullName>
    </alternativeName>
    <alternativeName>
        <fullName>Muscle FBPase</fullName>
    </alternativeName>
</protein>
<keyword id="KW-0021">Allosteric enzyme</keyword>
<keyword id="KW-0106">Calcium</keyword>
<keyword id="KW-0119">Carbohydrate metabolism</keyword>
<keyword id="KW-0965">Cell junction</keyword>
<keyword id="KW-0963">Cytoplasm</keyword>
<keyword id="KW-0312">Gluconeogenesis</keyword>
<keyword id="KW-0378">Hydrolase</keyword>
<keyword id="KW-0460">Magnesium</keyword>
<keyword id="KW-0479">Metal-binding</keyword>
<keyword id="KW-0539">Nucleus</keyword>
<keyword id="KW-0597">Phosphoprotein</keyword>
<keyword id="KW-1185">Reference proteome</keyword>